<organism>
    <name type="scientific">Aquifex aeolicus (strain VF5)</name>
    <dbReference type="NCBI Taxonomy" id="224324"/>
    <lineage>
        <taxon>Bacteria</taxon>
        <taxon>Pseudomonadati</taxon>
        <taxon>Aquificota</taxon>
        <taxon>Aquificia</taxon>
        <taxon>Aquificales</taxon>
        <taxon>Aquificaceae</taxon>
        <taxon>Aquifex</taxon>
    </lineage>
</organism>
<keyword id="KW-0001">2Fe-2S</keyword>
<keyword id="KW-0903">Direct protein sequencing</keyword>
<keyword id="KW-0249">Electron transport</keyword>
<keyword id="KW-0408">Iron</keyword>
<keyword id="KW-0411">Iron-sulfur</keyword>
<keyword id="KW-0479">Metal-binding</keyword>
<keyword id="KW-1185">Reference proteome</keyword>
<keyword id="KW-0813">Transport</keyword>
<dbReference type="EMBL" id="AE000657">
    <property type="status" value="NOT_ANNOTATED_CDS"/>
    <property type="molecule type" value="Genomic_DNA"/>
</dbReference>
<dbReference type="PIR" id="A59444">
    <property type="entry name" value="A59444"/>
</dbReference>
<dbReference type="RefSeq" id="WP_164930634.1">
    <property type="nucleotide sequence ID" value="NC_000918.1"/>
</dbReference>
<dbReference type="SMR" id="P59799"/>
<dbReference type="FunCoup" id="P59799">
    <property type="interactions" value="250"/>
</dbReference>
<dbReference type="InParanoid" id="P59799"/>
<dbReference type="Proteomes" id="UP000000798">
    <property type="component" value="Chromosome"/>
</dbReference>
<dbReference type="GO" id="GO:0051537">
    <property type="term" value="F:2 iron, 2 sulfur cluster binding"/>
    <property type="evidence" value="ECO:0007669"/>
    <property type="project" value="UniProtKB-KW"/>
</dbReference>
<dbReference type="GO" id="GO:0046872">
    <property type="term" value="F:metal ion binding"/>
    <property type="evidence" value="ECO:0007669"/>
    <property type="project" value="UniProtKB-KW"/>
</dbReference>
<dbReference type="GO" id="GO:0140647">
    <property type="term" value="P:P450-containing electron transport chain"/>
    <property type="evidence" value="ECO:0007669"/>
    <property type="project" value="InterPro"/>
</dbReference>
<dbReference type="CDD" id="cd00207">
    <property type="entry name" value="fer2"/>
    <property type="match status" value="1"/>
</dbReference>
<dbReference type="Gene3D" id="3.10.20.30">
    <property type="match status" value="1"/>
</dbReference>
<dbReference type="InterPro" id="IPR036010">
    <property type="entry name" value="2Fe-2S_ferredoxin-like_sf"/>
</dbReference>
<dbReference type="InterPro" id="IPR001041">
    <property type="entry name" value="2Fe-2S_ferredoxin-type"/>
</dbReference>
<dbReference type="InterPro" id="IPR001055">
    <property type="entry name" value="Adrenodoxin-like"/>
</dbReference>
<dbReference type="InterPro" id="IPR012675">
    <property type="entry name" value="Beta-grasp_dom_sf"/>
</dbReference>
<dbReference type="PANTHER" id="PTHR23426:SF65">
    <property type="entry name" value="FERREDOXIN-2, MITOCHONDRIAL"/>
    <property type="match status" value="1"/>
</dbReference>
<dbReference type="PANTHER" id="PTHR23426">
    <property type="entry name" value="FERREDOXIN/ADRENODOXIN"/>
    <property type="match status" value="1"/>
</dbReference>
<dbReference type="Pfam" id="PF00111">
    <property type="entry name" value="Fer2"/>
    <property type="match status" value="1"/>
</dbReference>
<dbReference type="SUPFAM" id="SSF54292">
    <property type="entry name" value="2Fe-2S ferredoxin-like"/>
    <property type="match status" value="1"/>
</dbReference>
<dbReference type="PROSITE" id="PS51085">
    <property type="entry name" value="2FE2S_FER_2"/>
    <property type="match status" value="1"/>
</dbReference>
<comment type="function">
    <text>May be involved in the assembly of iron-sulfur clusters (Isc-Fd).</text>
</comment>
<comment type="cofactor">
    <cofactor evidence="1">
        <name>[2Fe-2S] cluster</name>
        <dbReference type="ChEBI" id="CHEBI:190135"/>
    </cofactor>
    <text evidence="1">Binds 1 [2Fe-2S] cluster.</text>
</comment>
<comment type="biophysicochemical properties">
    <redoxPotential>
        <text>E(0) is -390 mV.</text>
    </redoxPotential>
    <temperatureDependence>
        <text>Optimum temperature is 106 degrees Celsius at pH 7. Highly thermostable.</text>
    </temperatureDependence>
</comment>
<comment type="similarity">
    <text evidence="3">Belongs to the adrenodoxin/putidaredoxin family.</text>
</comment>
<protein>
    <recommendedName>
        <fullName>2Fe-2S ferredoxin-5</fullName>
        <shortName>Fd5</shortName>
    </recommendedName>
</protein>
<evidence type="ECO:0000250" key="1"/>
<evidence type="ECO:0000255" key="2">
    <source>
        <dbReference type="PROSITE-ProRule" id="PRU00465"/>
    </source>
</evidence>
<evidence type="ECO:0000305" key="3"/>
<name>FER5_AQUAE</name>
<sequence>MPKVIVANINAEFEGIENETIMQILYRNGIEIDSACGGHGQCTSCKVLIISGSENLYPAEFEEKDTLEENGMDPETERLSCQAKLNGKGDVVIYLP</sequence>
<proteinExistence type="evidence at protein level"/>
<gene>
    <name type="primary">fdx5</name>
    <name type="ordered locus">aq_659</name>
</gene>
<reference key="1">
    <citation type="journal article" date="1998" name="Nature">
        <title>The complete genome of the hyperthermophilic bacterium Aquifex aeolicus.</title>
        <authorList>
            <person name="Deckert G."/>
            <person name="Warren P.V."/>
            <person name="Gaasterland T."/>
            <person name="Young W.G."/>
            <person name="Lenox A.L."/>
            <person name="Graham D.E."/>
            <person name="Overbeek R."/>
            <person name="Snead M.A."/>
            <person name="Keller M."/>
            <person name="Aujay M."/>
            <person name="Huber R."/>
            <person name="Feldman R.A."/>
            <person name="Short J.M."/>
            <person name="Olsen G.J."/>
            <person name="Swanson R.V."/>
        </authorList>
    </citation>
    <scope>NUCLEOTIDE SEQUENCE [LARGE SCALE GENOMIC DNA]</scope>
    <source>
        <strain>VF5</strain>
    </source>
</reference>
<reference key="2">
    <citation type="journal article" date="2003" name="Biochemistry">
        <title>An Isc-type extremely thermostable [2Fe-2S] ferredoxin from Aquifex aeolicus. Biochemical, spectroscopic, and unfolding studies.</title>
        <authorList>
            <person name="Mitou G."/>
            <person name="Higgins C."/>
            <person name="Wittung-Stafshede P."/>
            <person name="Conover R.C."/>
            <person name="Smith A.D."/>
            <person name="Johnson M.K."/>
            <person name="Gaillard J."/>
            <person name="Stubna A."/>
            <person name="Muenck E."/>
            <person name="Meyer J."/>
        </authorList>
    </citation>
    <scope>IDENTIFICATION</scope>
    <scope>PARTIAL PROTEIN SEQUENCE</scope>
    <scope>CHARACTERIZATION</scope>
</reference>
<accession>P59799</accession>
<feature type="initiator methionine" description="Removed">
    <location>
        <position position="1"/>
    </location>
</feature>
<feature type="chain" id="PRO_0000201181" description="2Fe-2S ferredoxin-5">
    <location>
        <begin position="2"/>
        <end position="96"/>
    </location>
</feature>
<feature type="domain" description="2Fe-2S ferredoxin-type" evidence="2">
    <location>
        <begin position="2"/>
        <end position="96"/>
    </location>
</feature>
<feature type="binding site" evidence="2">
    <location>
        <position position="36"/>
    </location>
    <ligand>
        <name>[2Fe-2S] cluster</name>
        <dbReference type="ChEBI" id="CHEBI:190135"/>
    </ligand>
</feature>
<feature type="binding site" evidence="2">
    <location>
        <position position="42"/>
    </location>
    <ligand>
        <name>[2Fe-2S] cluster</name>
        <dbReference type="ChEBI" id="CHEBI:190135"/>
    </ligand>
</feature>
<feature type="binding site" evidence="2">
    <location>
        <position position="45"/>
    </location>
    <ligand>
        <name>[2Fe-2S] cluster</name>
        <dbReference type="ChEBI" id="CHEBI:190135"/>
    </ligand>
</feature>
<feature type="binding site" evidence="2">
    <location>
        <position position="81"/>
    </location>
    <ligand>
        <name>[2Fe-2S] cluster</name>
        <dbReference type="ChEBI" id="CHEBI:190135"/>
    </ligand>
</feature>